<organism>
    <name type="scientific">Bordetella bronchiseptica (strain ATCC BAA-588 / NCTC 13252 / RB50)</name>
    <name type="common">Alcaligenes bronchisepticus</name>
    <dbReference type="NCBI Taxonomy" id="257310"/>
    <lineage>
        <taxon>Bacteria</taxon>
        <taxon>Pseudomonadati</taxon>
        <taxon>Pseudomonadota</taxon>
        <taxon>Betaproteobacteria</taxon>
        <taxon>Burkholderiales</taxon>
        <taxon>Alcaligenaceae</taxon>
        <taxon>Bordetella</taxon>
    </lineage>
</organism>
<gene>
    <name evidence="1" type="primary">der</name>
    <name type="synonym">engA</name>
    <name type="ordered locus">BB3172</name>
</gene>
<reference key="1">
    <citation type="journal article" date="2003" name="Nat. Genet.">
        <title>Comparative analysis of the genome sequences of Bordetella pertussis, Bordetella parapertussis and Bordetella bronchiseptica.</title>
        <authorList>
            <person name="Parkhill J."/>
            <person name="Sebaihia M."/>
            <person name="Preston A."/>
            <person name="Murphy L.D."/>
            <person name="Thomson N.R."/>
            <person name="Harris D.E."/>
            <person name="Holden M.T.G."/>
            <person name="Churcher C.M."/>
            <person name="Bentley S.D."/>
            <person name="Mungall K.L."/>
            <person name="Cerdeno-Tarraga A.-M."/>
            <person name="Temple L."/>
            <person name="James K.D."/>
            <person name="Harris B."/>
            <person name="Quail M.A."/>
            <person name="Achtman M."/>
            <person name="Atkin R."/>
            <person name="Baker S."/>
            <person name="Basham D."/>
            <person name="Bason N."/>
            <person name="Cherevach I."/>
            <person name="Chillingworth T."/>
            <person name="Collins M."/>
            <person name="Cronin A."/>
            <person name="Davis P."/>
            <person name="Doggett J."/>
            <person name="Feltwell T."/>
            <person name="Goble A."/>
            <person name="Hamlin N."/>
            <person name="Hauser H."/>
            <person name="Holroyd S."/>
            <person name="Jagels K."/>
            <person name="Leather S."/>
            <person name="Moule S."/>
            <person name="Norberczak H."/>
            <person name="O'Neil S."/>
            <person name="Ormond D."/>
            <person name="Price C."/>
            <person name="Rabbinowitsch E."/>
            <person name="Rutter S."/>
            <person name="Sanders M."/>
            <person name="Saunders D."/>
            <person name="Seeger K."/>
            <person name="Sharp S."/>
            <person name="Simmonds M."/>
            <person name="Skelton J."/>
            <person name="Squares R."/>
            <person name="Squares S."/>
            <person name="Stevens K."/>
            <person name="Unwin L."/>
            <person name="Whitehead S."/>
            <person name="Barrell B.G."/>
            <person name="Maskell D.J."/>
        </authorList>
    </citation>
    <scope>NUCLEOTIDE SEQUENCE [LARGE SCALE GENOMIC DNA]</scope>
    <source>
        <strain>ATCC BAA-588 / NCTC 13252 / RB50</strain>
    </source>
</reference>
<name>DER_BORBR</name>
<dbReference type="EMBL" id="BX640446">
    <property type="protein sequence ID" value="CAE33664.1"/>
    <property type="molecule type" value="Genomic_DNA"/>
</dbReference>
<dbReference type="RefSeq" id="WP_003810703.1">
    <property type="nucleotide sequence ID" value="NC_002927.3"/>
</dbReference>
<dbReference type="SMR" id="Q7WHN4"/>
<dbReference type="GeneID" id="93204638"/>
<dbReference type="KEGG" id="bbr:BB3172"/>
<dbReference type="eggNOG" id="COG1160">
    <property type="taxonomic scope" value="Bacteria"/>
</dbReference>
<dbReference type="HOGENOM" id="CLU_016077_5_0_4"/>
<dbReference type="Proteomes" id="UP000001027">
    <property type="component" value="Chromosome"/>
</dbReference>
<dbReference type="GO" id="GO:0016887">
    <property type="term" value="F:ATP hydrolysis activity"/>
    <property type="evidence" value="ECO:0007669"/>
    <property type="project" value="InterPro"/>
</dbReference>
<dbReference type="GO" id="GO:0005525">
    <property type="term" value="F:GTP binding"/>
    <property type="evidence" value="ECO:0007669"/>
    <property type="project" value="UniProtKB-UniRule"/>
</dbReference>
<dbReference type="GO" id="GO:0043022">
    <property type="term" value="F:ribosome binding"/>
    <property type="evidence" value="ECO:0007669"/>
    <property type="project" value="TreeGrafter"/>
</dbReference>
<dbReference type="GO" id="GO:0042254">
    <property type="term" value="P:ribosome biogenesis"/>
    <property type="evidence" value="ECO:0007669"/>
    <property type="project" value="UniProtKB-KW"/>
</dbReference>
<dbReference type="CDD" id="cd01894">
    <property type="entry name" value="EngA1"/>
    <property type="match status" value="1"/>
</dbReference>
<dbReference type="CDD" id="cd01895">
    <property type="entry name" value="EngA2"/>
    <property type="match status" value="1"/>
</dbReference>
<dbReference type="FunFam" id="3.30.300.20:FF:000004">
    <property type="entry name" value="GTPase Der"/>
    <property type="match status" value="1"/>
</dbReference>
<dbReference type="FunFam" id="3.40.50.300:FF:000040">
    <property type="entry name" value="GTPase Der"/>
    <property type="match status" value="1"/>
</dbReference>
<dbReference type="FunFam" id="3.40.50.300:FF:000057">
    <property type="entry name" value="GTPase Der"/>
    <property type="match status" value="1"/>
</dbReference>
<dbReference type="Gene3D" id="3.30.300.20">
    <property type="match status" value="1"/>
</dbReference>
<dbReference type="Gene3D" id="3.40.50.300">
    <property type="entry name" value="P-loop containing nucleotide triphosphate hydrolases"/>
    <property type="match status" value="2"/>
</dbReference>
<dbReference type="HAMAP" id="MF_00195">
    <property type="entry name" value="GTPase_Der"/>
    <property type="match status" value="1"/>
</dbReference>
<dbReference type="InterPro" id="IPR003593">
    <property type="entry name" value="AAA+_ATPase"/>
</dbReference>
<dbReference type="InterPro" id="IPR031166">
    <property type="entry name" value="G_ENGA"/>
</dbReference>
<dbReference type="InterPro" id="IPR006073">
    <property type="entry name" value="GTP-bd"/>
</dbReference>
<dbReference type="InterPro" id="IPR016484">
    <property type="entry name" value="GTPase_Der"/>
</dbReference>
<dbReference type="InterPro" id="IPR032859">
    <property type="entry name" value="KH_dom-like"/>
</dbReference>
<dbReference type="InterPro" id="IPR015946">
    <property type="entry name" value="KH_dom-like_a/b"/>
</dbReference>
<dbReference type="InterPro" id="IPR027417">
    <property type="entry name" value="P-loop_NTPase"/>
</dbReference>
<dbReference type="InterPro" id="IPR005225">
    <property type="entry name" value="Small_GTP-bd"/>
</dbReference>
<dbReference type="NCBIfam" id="TIGR03594">
    <property type="entry name" value="GTPase_EngA"/>
    <property type="match status" value="1"/>
</dbReference>
<dbReference type="NCBIfam" id="TIGR00231">
    <property type="entry name" value="small_GTP"/>
    <property type="match status" value="2"/>
</dbReference>
<dbReference type="PANTHER" id="PTHR43834">
    <property type="entry name" value="GTPASE DER"/>
    <property type="match status" value="1"/>
</dbReference>
<dbReference type="PANTHER" id="PTHR43834:SF6">
    <property type="entry name" value="GTPASE DER"/>
    <property type="match status" value="1"/>
</dbReference>
<dbReference type="Pfam" id="PF14714">
    <property type="entry name" value="KH_dom-like"/>
    <property type="match status" value="1"/>
</dbReference>
<dbReference type="Pfam" id="PF01926">
    <property type="entry name" value="MMR_HSR1"/>
    <property type="match status" value="2"/>
</dbReference>
<dbReference type="PIRSF" id="PIRSF006485">
    <property type="entry name" value="GTP-binding_EngA"/>
    <property type="match status" value="1"/>
</dbReference>
<dbReference type="PRINTS" id="PR00326">
    <property type="entry name" value="GTP1OBG"/>
</dbReference>
<dbReference type="SMART" id="SM00382">
    <property type="entry name" value="AAA"/>
    <property type="match status" value="2"/>
</dbReference>
<dbReference type="SUPFAM" id="SSF52540">
    <property type="entry name" value="P-loop containing nucleoside triphosphate hydrolases"/>
    <property type="match status" value="2"/>
</dbReference>
<dbReference type="PROSITE" id="PS51712">
    <property type="entry name" value="G_ENGA"/>
    <property type="match status" value="2"/>
</dbReference>
<proteinExistence type="inferred from homology"/>
<comment type="function">
    <text evidence="1">GTPase that plays an essential role in the late steps of ribosome biogenesis.</text>
</comment>
<comment type="subunit">
    <text evidence="1">Associates with the 50S ribosomal subunit.</text>
</comment>
<comment type="similarity">
    <text evidence="1">Belongs to the TRAFAC class TrmE-Era-EngA-EngB-Septin-like GTPase superfamily. EngA (Der) GTPase family.</text>
</comment>
<feature type="chain" id="PRO_0000178967" description="GTPase Der">
    <location>
        <begin position="1"/>
        <end position="451"/>
    </location>
</feature>
<feature type="domain" description="EngA-type G 1">
    <location>
        <begin position="5"/>
        <end position="170"/>
    </location>
</feature>
<feature type="domain" description="EngA-type G 2">
    <location>
        <begin position="186"/>
        <end position="359"/>
    </location>
</feature>
<feature type="domain" description="KH-like" evidence="1">
    <location>
        <begin position="360"/>
        <end position="444"/>
    </location>
</feature>
<feature type="binding site" evidence="1">
    <location>
        <begin position="11"/>
        <end position="18"/>
    </location>
    <ligand>
        <name>GTP</name>
        <dbReference type="ChEBI" id="CHEBI:37565"/>
        <label>1</label>
    </ligand>
</feature>
<feature type="binding site" evidence="1">
    <location>
        <begin position="58"/>
        <end position="62"/>
    </location>
    <ligand>
        <name>GTP</name>
        <dbReference type="ChEBI" id="CHEBI:37565"/>
        <label>1</label>
    </ligand>
</feature>
<feature type="binding site" evidence="1">
    <location>
        <begin position="122"/>
        <end position="125"/>
    </location>
    <ligand>
        <name>GTP</name>
        <dbReference type="ChEBI" id="CHEBI:37565"/>
        <label>1</label>
    </ligand>
</feature>
<feature type="binding site" evidence="1">
    <location>
        <begin position="192"/>
        <end position="199"/>
    </location>
    <ligand>
        <name>GTP</name>
        <dbReference type="ChEBI" id="CHEBI:37565"/>
        <label>2</label>
    </ligand>
</feature>
<feature type="binding site" evidence="1">
    <location>
        <begin position="239"/>
        <end position="243"/>
    </location>
    <ligand>
        <name>GTP</name>
        <dbReference type="ChEBI" id="CHEBI:37565"/>
        <label>2</label>
    </ligand>
</feature>
<feature type="binding site" evidence="1">
    <location>
        <begin position="304"/>
        <end position="307"/>
    </location>
    <ligand>
        <name>GTP</name>
        <dbReference type="ChEBI" id="CHEBI:37565"/>
        <label>2</label>
    </ligand>
</feature>
<protein>
    <recommendedName>
        <fullName evidence="1">GTPase Der</fullName>
    </recommendedName>
    <alternativeName>
        <fullName evidence="1">GTP-binding protein EngA</fullName>
    </alternativeName>
</protein>
<evidence type="ECO:0000255" key="1">
    <source>
        <dbReference type="HAMAP-Rule" id="MF_00195"/>
    </source>
</evidence>
<accession>Q7WHN4</accession>
<sequence>MSFKPVVALVGRPNVGKSTLFNRLTRSRAALVADFSGLTRDRHYGEGRVGDTPFLVIDTGGFEPVAKDGILAEMARQTRQAIAEADVVVFLVDARAGVNAHDHEIARLLRKSGQQRVLLAVNKAEGMGVGNATGDFHELGLGEPHPISAAHGDGIVDLIEIALSGLVAPPADTGEQLEQDVVDHRIKLAIVGRPNVGKSTLINTLLGEERVIAFDMPGTTRDAIEIDFERDGRKYTLIDTAGLRKRGKVFEAIEKFSVIKTLQAIEASNVVLLMIDAQAEVSEQDAHIAGFVLETGRAVVVAINKWDGLDSDQRERIEREFQRKLRFLGFARMHTISALKGQGVKPLLKSVNAAHAAAFAKLSTPRLTRELQAAVEQQPPPRKGIFRPKMRYAHQGGQNPPLIVIHGNALDAVPDSYRRYLETRFRNAFDLAGTPLRIEFKSSRNPYVQEN</sequence>
<keyword id="KW-0342">GTP-binding</keyword>
<keyword id="KW-0547">Nucleotide-binding</keyword>
<keyword id="KW-0677">Repeat</keyword>
<keyword id="KW-0690">Ribosome biogenesis</keyword>